<protein>
    <recommendedName>
        <fullName evidence="1">Glycine dehydrogenase (decarboxylating)</fullName>
        <ecNumber evidence="1">1.4.4.2</ecNumber>
    </recommendedName>
    <alternativeName>
        <fullName evidence="1">Glycine cleavage system P-protein</fullName>
    </alternativeName>
    <alternativeName>
        <fullName evidence="1">Glycine decarboxylase</fullName>
    </alternativeName>
    <alternativeName>
        <fullName evidence="1">Glycine dehydrogenase (aminomethyl-transferring)</fullName>
    </alternativeName>
</protein>
<keyword id="KW-0560">Oxidoreductase</keyword>
<keyword id="KW-0663">Pyridoxal phosphate</keyword>
<accession>A0K321</accession>
<feature type="chain" id="PRO_1000045569" description="Glycine dehydrogenase (decarboxylating)">
    <location>
        <begin position="1"/>
        <end position="975"/>
    </location>
</feature>
<feature type="modified residue" description="N6-(pyridoxal phosphate)lysine" evidence="1">
    <location>
        <position position="723"/>
    </location>
</feature>
<name>GCSP_BURCH</name>
<comment type="function">
    <text evidence="1">The glycine cleavage system catalyzes the degradation of glycine. The P protein binds the alpha-amino group of glycine through its pyridoxal phosphate cofactor; CO(2) is released and the remaining methylamine moiety is then transferred to the lipoamide cofactor of the H protein.</text>
</comment>
<comment type="catalytic activity">
    <reaction evidence="1">
        <text>N(6)-[(R)-lipoyl]-L-lysyl-[glycine-cleavage complex H protein] + glycine + H(+) = N(6)-[(R)-S(8)-aminomethyldihydrolipoyl]-L-lysyl-[glycine-cleavage complex H protein] + CO2</text>
        <dbReference type="Rhea" id="RHEA:24304"/>
        <dbReference type="Rhea" id="RHEA-COMP:10494"/>
        <dbReference type="Rhea" id="RHEA-COMP:10495"/>
        <dbReference type="ChEBI" id="CHEBI:15378"/>
        <dbReference type="ChEBI" id="CHEBI:16526"/>
        <dbReference type="ChEBI" id="CHEBI:57305"/>
        <dbReference type="ChEBI" id="CHEBI:83099"/>
        <dbReference type="ChEBI" id="CHEBI:83143"/>
        <dbReference type="EC" id="1.4.4.2"/>
    </reaction>
</comment>
<comment type="cofactor">
    <cofactor evidence="1">
        <name>pyridoxal 5'-phosphate</name>
        <dbReference type="ChEBI" id="CHEBI:597326"/>
    </cofactor>
</comment>
<comment type="subunit">
    <text evidence="1">The glycine cleavage system is composed of four proteins: P, T, L and H.</text>
</comment>
<comment type="similarity">
    <text evidence="1">Belongs to the GcvP family.</text>
</comment>
<gene>
    <name evidence="1" type="primary">gcvP</name>
    <name type="ordered locus">Bcen2424_0144</name>
</gene>
<reference key="1">
    <citation type="submission" date="2006-08" db="EMBL/GenBank/DDBJ databases">
        <title>Complete sequence of chromosome 1 of Burkholderia cenocepacia HI2424.</title>
        <authorList>
            <person name="Copeland A."/>
            <person name="Lucas S."/>
            <person name="Lapidus A."/>
            <person name="Barry K."/>
            <person name="Detter J.C."/>
            <person name="Glavina del Rio T."/>
            <person name="Hammon N."/>
            <person name="Israni S."/>
            <person name="Pitluck S."/>
            <person name="Chain P."/>
            <person name="Malfatti S."/>
            <person name="Shin M."/>
            <person name="Vergez L."/>
            <person name="Schmutz J."/>
            <person name="Larimer F."/>
            <person name="Land M."/>
            <person name="Hauser L."/>
            <person name="Kyrpides N."/>
            <person name="Kim E."/>
            <person name="LiPuma J.J."/>
            <person name="Gonzalez C.F."/>
            <person name="Konstantinidis K."/>
            <person name="Tiedje J.M."/>
            <person name="Richardson P."/>
        </authorList>
    </citation>
    <scope>NUCLEOTIDE SEQUENCE [LARGE SCALE GENOMIC DNA]</scope>
    <source>
        <strain>HI2424</strain>
    </source>
</reference>
<evidence type="ECO:0000255" key="1">
    <source>
        <dbReference type="HAMAP-Rule" id="MF_00711"/>
    </source>
</evidence>
<dbReference type="EC" id="1.4.4.2" evidence="1"/>
<dbReference type="EMBL" id="CP000458">
    <property type="protein sequence ID" value="ABK06898.1"/>
    <property type="molecule type" value="Genomic_DNA"/>
</dbReference>
<dbReference type="RefSeq" id="WP_011546764.1">
    <property type="nucleotide sequence ID" value="NC_008542.1"/>
</dbReference>
<dbReference type="SMR" id="A0K321"/>
<dbReference type="KEGG" id="bch:Bcen2424_0144"/>
<dbReference type="HOGENOM" id="CLU_004620_1_1_4"/>
<dbReference type="GO" id="GO:0005829">
    <property type="term" value="C:cytosol"/>
    <property type="evidence" value="ECO:0007669"/>
    <property type="project" value="TreeGrafter"/>
</dbReference>
<dbReference type="GO" id="GO:0005960">
    <property type="term" value="C:glycine cleavage complex"/>
    <property type="evidence" value="ECO:0007669"/>
    <property type="project" value="TreeGrafter"/>
</dbReference>
<dbReference type="GO" id="GO:0016594">
    <property type="term" value="F:glycine binding"/>
    <property type="evidence" value="ECO:0007669"/>
    <property type="project" value="TreeGrafter"/>
</dbReference>
<dbReference type="GO" id="GO:0004375">
    <property type="term" value="F:glycine dehydrogenase (decarboxylating) activity"/>
    <property type="evidence" value="ECO:0007669"/>
    <property type="project" value="UniProtKB-EC"/>
</dbReference>
<dbReference type="GO" id="GO:0030170">
    <property type="term" value="F:pyridoxal phosphate binding"/>
    <property type="evidence" value="ECO:0007669"/>
    <property type="project" value="TreeGrafter"/>
</dbReference>
<dbReference type="GO" id="GO:0019464">
    <property type="term" value="P:glycine decarboxylation via glycine cleavage system"/>
    <property type="evidence" value="ECO:0007669"/>
    <property type="project" value="UniProtKB-UniRule"/>
</dbReference>
<dbReference type="CDD" id="cd00613">
    <property type="entry name" value="GDC-P"/>
    <property type="match status" value="2"/>
</dbReference>
<dbReference type="FunFam" id="3.40.640.10:FF:000005">
    <property type="entry name" value="Glycine dehydrogenase (decarboxylating), mitochondrial"/>
    <property type="match status" value="1"/>
</dbReference>
<dbReference type="FunFam" id="3.90.1150.10:FF:000007">
    <property type="entry name" value="Glycine dehydrogenase (decarboxylating), mitochondrial"/>
    <property type="match status" value="1"/>
</dbReference>
<dbReference type="FunFam" id="3.40.640.10:FF:000007">
    <property type="entry name" value="glycine dehydrogenase (Decarboxylating), mitochondrial"/>
    <property type="match status" value="1"/>
</dbReference>
<dbReference type="Gene3D" id="3.90.1150.10">
    <property type="entry name" value="Aspartate Aminotransferase, domain 1"/>
    <property type="match status" value="2"/>
</dbReference>
<dbReference type="Gene3D" id="3.40.640.10">
    <property type="entry name" value="Type I PLP-dependent aspartate aminotransferase-like (Major domain)"/>
    <property type="match status" value="2"/>
</dbReference>
<dbReference type="HAMAP" id="MF_00711">
    <property type="entry name" value="GcvP"/>
    <property type="match status" value="1"/>
</dbReference>
<dbReference type="InterPro" id="IPR003437">
    <property type="entry name" value="GcvP"/>
</dbReference>
<dbReference type="InterPro" id="IPR049316">
    <property type="entry name" value="GDC-P_C"/>
</dbReference>
<dbReference type="InterPro" id="IPR049315">
    <property type="entry name" value="GDC-P_N"/>
</dbReference>
<dbReference type="InterPro" id="IPR020581">
    <property type="entry name" value="GDC_P"/>
</dbReference>
<dbReference type="InterPro" id="IPR015424">
    <property type="entry name" value="PyrdxlP-dep_Trfase"/>
</dbReference>
<dbReference type="InterPro" id="IPR015421">
    <property type="entry name" value="PyrdxlP-dep_Trfase_major"/>
</dbReference>
<dbReference type="InterPro" id="IPR015422">
    <property type="entry name" value="PyrdxlP-dep_Trfase_small"/>
</dbReference>
<dbReference type="NCBIfam" id="TIGR00461">
    <property type="entry name" value="gcvP"/>
    <property type="match status" value="1"/>
</dbReference>
<dbReference type="NCBIfam" id="NF003346">
    <property type="entry name" value="PRK04366.1"/>
    <property type="match status" value="1"/>
</dbReference>
<dbReference type="PANTHER" id="PTHR11773:SF1">
    <property type="entry name" value="GLYCINE DEHYDROGENASE (DECARBOXYLATING), MITOCHONDRIAL"/>
    <property type="match status" value="1"/>
</dbReference>
<dbReference type="PANTHER" id="PTHR11773">
    <property type="entry name" value="GLYCINE DEHYDROGENASE, DECARBOXYLATING"/>
    <property type="match status" value="1"/>
</dbReference>
<dbReference type="Pfam" id="PF21478">
    <property type="entry name" value="GcvP2_C"/>
    <property type="match status" value="1"/>
</dbReference>
<dbReference type="Pfam" id="PF02347">
    <property type="entry name" value="GDC-P"/>
    <property type="match status" value="2"/>
</dbReference>
<dbReference type="SUPFAM" id="SSF53383">
    <property type="entry name" value="PLP-dependent transferases"/>
    <property type="match status" value="2"/>
</dbReference>
<sequence length="975" mass="104165">MKLEHPDRLMNRTPLSLAALETHDAFAERHIGPDAASQQAMLDTLGFASRAALIDAVIPASIRRAETLPLGPFAQPKSEAEALAALRALADKNQVFRSYIGQGYHDTHTPAVILRNVLENPAWYTAYTPYQPEISQGRLEALLNFQQMVADLTGLAISNASLLDEATAAAEAMTLLQRTGKPKSNVFYVADDVLPQTLEVIRTRALPIGIEVKTGPAADAAQANAFGVLLQYPGVNGDVRDYRALTDAIHAAGGHVVVAADLLALTVLTPPGEWGADVAIGNTQRFGVPMGFGGPHAAYLAVRDEFKRQMPGRLVGVTVDAQGKPALRLALQTREQHIRREKATSNVCTAQALLAIMASMYAVYHGPHGLKTIALRVNRIAALLAAGVKQLGFATVNDTFFDTLTIDTGARTAQVHEFAKAKRINLRRVSDTQVGVSVDETTTRDDLADLLDVFAQAAGGTAPAVDALDAGLAGVAALPAGLERTSAYLTHHVFNRHHSETEMLRYLRSLSDKDLALDRSMIPLGSCTMKLNATSEMLPVTWPEFGGIHPFAPAEQTVGYREMIDQLEEMLVAATGYAAVSLQPNAGSQGEYAGLLIIHAYHASRGEGHRDVCLIPASAHGTNPASAHMAGMKVVVVACDAQGNVDIADLKAKAEQHSANLAAIMITYPSTHGVFEQNVREICEIVHAHGGQVYVDGANMNAMVGLTAPGQFGGDVSHLNLHKTFCIPHGGGGPGVGPVAVGAHLAKFLPNQRSTGYARAEDGIGAVSAAPYGSASILPISWMYIAMMGAKNLTAATETAILNANYIAKRLAPHYPVLYSGPGGLVAHECILDLRPIKETSGISVDDVAKRLMDYGFHAPTMSFPVPGTLMVEPTESESQEELDRFIAAMIAIREEIRAVEEGRADREDNPLRHAPHTAAVVTANEWPHAYSREQAAYPVASLGTNKYWPPVGRADNAYGDRNLFCSCVPMSDYA</sequence>
<organism>
    <name type="scientific">Burkholderia cenocepacia (strain HI2424)</name>
    <dbReference type="NCBI Taxonomy" id="331272"/>
    <lineage>
        <taxon>Bacteria</taxon>
        <taxon>Pseudomonadati</taxon>
        <taxon>Pseudomonadota</taxon>
        <taxon>Betaproteobacteria</taxon>
        <taxon>Burkholderiales</taxon>
        <taxon>Burkholderiaceae</taxon>
        <taxon>Burkholderia</taxon>
        <taxon>Burkholderia cepacia complex</taxon>
    </lineage>
</organism>
<proteinExistence type="inferred from homology"/>